<protein>
    <recommendedName>
        <fullName evidence="1">Isoleucine--tRNA ligase</fullName>
        <ecNumber evidence="1">6.1.1.5</ecNumber>
    </recommendedName>
    <alternativeName>
        <fullName evidence="1">Isoleucyl-tRNA synthetase</fullName>
        <shortName evidence="1">IleRS</shortName>
    </alternativeName>
</protein>
<gene>
    <name evidence="1" type="primary">ileS</name>
    <name type="ordered locus">NMCC_0389</name>
</gene>
<organism>
    <name type="scientific">Neisseria meningitidis serogroup C (strain 053442)</name>
    <dbReference type="NCBI Taxonomy" id="374833"/>
    <lineage>
        <taxon>Bacteria</taxon>
        <taxon>Pseudomonadati</taxon>
        <taxon>Pseudomonadota</taxon>
        <taxon>Betaproteobacteria</taxon>
        <taxon>Neisseriales</taxon>
        <taxon>Neisseriaceae</taxon>
        <taxon>Neisseria</taxon>
    </lineage>
</organism>
<dbReference type="EC" id="6.1.1.5" evidence="1"/>
<dbReference type="EMBL" id="CP000381">
    <property type="protein sequence ID" value="ABX72595.1"/>
    <property type="molecule type" value="Genomic_DNA"/>
</dbReference>
<dbReference type="RefSeq" id="WP_012221291.1">
    <property type="nucleotide sequence ID" value="NC_010120.1"/>
</dbReference>
<dbReference type="SMR" id="A9M1J7"/>
<dbReference type="KEGG" id="nmn:NMCC_0389"/>
<dbReference type="HOGENOM" id="CLU_001493_7_1_4"/>
<dbReference type="Proteomes" id="UP000001177">
    <property type="component" value="Chromosome"/>
</dbReference>
<dbReference type="GO" id="GO:0005829">
    <property type="term" value="C:cytosol"/>
    <property type="evidence" value="ECO:0007669"/>
    <property type="project" value="TreeGrafter"/>
</dbReference>
<dbReference type="GO" id="GO:0002161">
    <property type="term" value="F:aminoacyl-tRNA deacylase activity"/>
    <property type="evidence" value="ECO:0007669"/>
    <property type="project" value="InterPro"/>
</dbReference>
<dbReference type="GO" id="GO:0005524">
    <property type="term" value="F:ATP binding"/>
    <property type="evidence" value="ECO:0007669"/>
    <property type="project" value="UniProtKB-UniRule"/>
</dbReference>
<dbReference type="GO" id="GO:0004822">
    <property type="term" value="F:isoleucine-tRNA ligase activity"/>
    <property type="evidence" value="ECO:0007669"/>
    <property type="project" value="UniProtKB-UniRule"/>
</dbReference>
<dbReference type="GO" id="GO:0000049">
    <property type="term" value="F:tRNA binding"/>
    <property type="evidence" value="ECO:0007669"/>
    <property type="project" value="InterPro"/>
</dbReference>
<dbReference type="GO" id="GO:0008270">
    <property type="term" value="F:zinc ion binding"/>
    <property type="evidence" value="ECO:0007669"/>
    <property type="project" value="UniProtKB-UniRule"/>
</dbReference>
<dbReference type="GO" id="GO:0006428">
    <property type="term" value="P:isoleucyl-tRNA aminoacylation"/>
    <property type="evidence" value="ECO:0007669"/>
    <property type="project" value="UniProtKB-UniRule"/>
</dbReference>
<dbReference type="CDD" id="cd07960">
    <property type="entry name" value="Anticodon_Ia_Ile_BEm"/>
    <property type="match status" value="1"/>
</dbReference>
<dbReference type="FunFam" id="3.40.50.620:FF:000042">
    <property type="entry name" value="Isoleucine--tRNA ligase"/>
    <property type="match status" value="1"/>
</dbReference>
<dbReference type="FunFam" id="3.40.50.620:FF:000048">
    <property type="entry name" value="Isoleucine--tRNA ligase"/>
    <property type="match status" value="1"/>
</dbReference>
<dbReference type="FunFam" id="3.90.740.10:FF:000022">
    <property type="entry name" value="Isoleucine--tRNA ligase"/>
    <property type="match status" value="1"/>
</dbReference>
<dbReference type="Gene3D" id="1.10.730.20">
    <property type="match status" value="1"/>
</dbReference>
<dbReference type="Gene3D" id="3.40.50.620">
    <property type="entry name" value="HUPs"/>
    <property type="match status" value="2"/>
</dbReference>
<dbReference type="Gene3D" id="3.90.740.10">
    <property type="entry name" value="Valyl/Leucyl/Isoleucyl-tRNA synthetase, editing domain"/>
    <property type="match status" value="1"/>
</dbReference>
<dbReference type="HAMAP" id="MF_02002">
    <property type="entry name" value="Ile_tRNA_synth_type1"/>
    <property type="match status" value="1"/>
</dbReference>
<dbReference type="InterPro" id="IPR001412">
    <property type="entry name" value="aa-tRNA-synth_I_CS"/>
</dbReference>
<dbReference type="InterPro" id="IPR002300">
    <property type="entry name" value="aa-tRNA-synth_Ia"/>
</dbReference>
<dbReference type="InterPro" id="IPR033708">
    <property type="entry name" value="Anticodon_Ile_BEm"/>
</dbReference>
<dbReference type="InterPro" id="IPR002301">
    <property type="entry name" value="Ile-tRNA-ligase"/>
</dbReference>
<dbReference type="InterPro" id="IPR023585">
    <property type="entry name" value="Ile-tRNA-ligase_type1"/>
</dbReference>
<dbReference type="InterPro" id="IPR050081">
    <property type="entry name" value="Ile-tRNA_ligase"/>
</dbReference>
<dbReference type="InterPro" id="IPR013155">
    <property type="entry name" value="M/V/L/I-tRNA-synth_anticd-bd"/>
</dbReference>
<dbReference type="InterPro" id="IPR014729">
    <property type="entry name" value="Rossmann-like_a/b/a_fold"/>
</dbReference>
<dbReference type="InterPro" id="IPR009080">
    <property type="entry name" value="tRNAsynth_Ia_anticodon-bd"/>
</dbReference>
<dbReference type="InterPro" id="IPR009008">
    <property type="entry name" value="Val/Leu/Ile-tRNA-synth_edit"/>
</dbReference>
<dbReference type="InterPro" id="IPR010663">
    <property type="entry name" value="Znf_FPG/IleRS"/>
</dbReference>
<dbReference type="NCBIfam" id="TIGR00392">
    <property type="entry name" value="ileS"/>
    <property type="match status" value="1"/>
</dbReference>
<dbReference type="PANTHER" id="PTHR42765:SF1">
    <property type="entry name" value="ISOLEUCINE--TRNA LIGASE, MITOCHONDRIAL"/>
    <property type="match status" value="1"/>
</dbReference>
<dbReference type="PANTHER" id="PTHR42765">
    <property type="entry name" value="SOLEUCYL-TRNA SYNTHETASE"/>
    <property type="match status" value="1"/>
</dbReference>
<dbReference type="Pfam" id="PF08264">
    <property type="entry name" value="Anticodon_1"/>
    <property type="match status" value="1"/>
</dbReference>
<dbReference type="Pfam" id="PF00133">
    <property type="entry name" value="tRNA-synt_1"/>
    <property type="match status" value="1"/>
</dbReference>
<dbReference type="Pfam" id="PF06827">
    <property type="entry name" value="zf-FPG_IleRS"/>
    <property type="match status" value="1"/>
</dbReference>
<dbReference type="PRINTS" id="PR00984">
    <property type="entry name" value="TRNASYNTHILE"/>
</dbReference>
<dbReference type="SUPFAM" id="SSF47323">
    <property type="entry name" value="Anticodon-binding domain of a subclass of class I aminoacyl-tRNA synthetases"/>
    <property type="match status" value="1"/>
</dbReference>
<dbReference type="SUPFAM" id="SSF52374">
    <property type="entry name" value="Nucleotidylyl transferase"/>
    <property type="match status" value="1"/>
</dbReference>
<dbReference type="SUPFAM" id="SSF50677">
    <property type="entry name" value="ValRS/IleRS/LeuRS editing domain"/>
    <property type="match status" value="1"/>
</dbReference>
<dbReference type="PROSITE" id="PS00178">
    <property type="entry name" value="AA_TRNA_LIGASE_I"/>
    <property type="match status" value="1"/>
</dbReference>
<comment type="function">
    <text evidence="1">Catalyzes the attachment of isoleucine to tRNA(Ile). As IleRS can inadvertently accommodate and process structurally similar amino acids such as valine, to avoid such errors it has two additional distinct tRNA(Ile)-dependent editing activities. One activity is designated as 'pretransfer' editing and involves the hydrolysis of activated Val-AMP. The other activity is designated 'posttransfer' editing and involves deacylation of mischarged Val-tRNA(Ile).</text>
</comment>
<comment type="catalytic activity">
    <reaction evidence="1">
        <text>tRNA(Ile) + L-isoleucine + ATP = L-isoleucyl-tRNA(Ile) + AMP + diphosphate</text>
        <dbReference type="Rhea" id="RHEA:11060"/>
        <dbReference type="Rhea" id="RHEA-COMP:9666"/>
        <dbReference type="Rhea" id="RHEA-COMP:9695"/>
        <dbReference type="ChEBI" id="CHEBI:30616"/>
        <dbReference type="ChEBI" id="CHEBI:33019"/>
        <dbReference type="ChEBI" id="CHEBI:58045"/>
        <dbReference type="ChEBI" id="CHEBI:78442"/>
        <dbReference type="ChEBI" id="CHEBI:78528"/>
        <dbReference type="ChEBI" id="CHEBI:456215"/>
        <dbReference type="EC" id="6.1.1.5"/>
    </reaction>
</comment>
<comment type="cofactor">
    <cofactor evidence="1">
        <name>Zn(2+)</name>
        <dbReference type="ChEBI" id="CHEBI:29105"/>
    </cofactor>
    <text evidence="1">Binds 1 zinc ion per subunit.</text>
</comment>
<comment type="subunit">
    <text evidence="1">Monomer.</text>
</comment>
<comment type="subcellular location">
    <subcellularLocation>
        <location evidence="1">Cytoplasm</location>
    </subcellularLocation>
</comment>
<comment type="domain">
    <text evidence="1">IleRS has two distinct active sites: one for aminoacylation and one for editing. The misactivated valine is translocated from the active site to the editing site, which sterically excludes the correctly activated isoleucine. The single editing site contains two valyl binding pockets, one specific for each substrate (Val-AMP or Val-tRNA(Ile)).</text>
</comment>
<comment type="similarity">
    <text evidence="1">Belongs to the class-I aminoacyl-tRNA synthetase family. IleS type 1 subfamily.</text>
</comment>
<name>SYI_NEIM0</name>
<proteinExistence type="inferred from homology"/>
<feature type="chain" id="PRO_1000088550" description="Isoleucine--tRNA ligase">
    <location>
        <begin position="1"/>
        <end position="929"/>
    </location>
</feature>
<feature type="short sequence motif" description="'HIGH' region">
    <location>
        <begin position="58"/>
        <end position="68"/>
    </location>
</feature>
<feature type="short sequence motif" description="'KMSKS' region">
    <location>
        <begin position="605"/>
        <end position="609"/>
    </location>
</feature>
<feature type="binding site" evidence="1">
    <location>
        <position position="563"/>
    </location>
    <ligand>
        <name>L-isoleucyl-5'-AMP</name>
        <dbReference type="ChEBI" id="CHEBI:178002"/>
    </ligand>
</feature>
<feature type="binding site" evidence="1">
    <location>
        <position position="608"/>
    </location>
    <ligand>
        <name>ATP</name>
        <dbReference type="ChEBI" id="CHEBI:30616"/>
    </ligand>
</feature>
<feature type="binding site" evidence="1">
    <location>
        <position position="892"/>
    </location>
    <ligand>
        <name>Zn(2+)</name>
        <dbReference type="ChEBI" id="CHEBI:29105"/>
    </ligand>
</feature>
<feature type="binding site" evidence="1">
    <location>
        <position position="895"/>
    </location>
    <ligand>
        <name>Zn(2+)</name>
        <dbReference type="ChEBI" id="CHEBI:29105"/>
    </ligand>
</feature>
<feature type="binding site" evidence="1">
    <location>
        <position position="912"/>
    </location>
    <ligand>
        <name>Zn(2+)</name>
        <dbReference type="ChEBI" id="CHEBI:29105"/>
    </ligand>
</feature>
<feature type="binding site" evidence="1">
    <location>
        <position position="915"/>
    </location>
    <ligand>
        <name>Zn(2+)</name>
        <dbReference type="ChEBI" id="CHEBI:29105"/>
    </ligand>
</feature>
<reference key="1">
    <citation type="journal article" date="2008" name="Genomics">
        <title>Characterization of ST-4821 complex, a unique Neisseria meningitidis clone.</title>
        <authorList>
            <person name="Peng J."/>
            <person name="Yang L."/>
            <person name="Yang F."/>
            <person name="Yang J."/>
            <person name="Yan Y."/>
            <person name="Nie H."/>
            <person name="Zhang X."/>
            <person name="Xiong Z."/>
            <person name="Jiang Y."/>
            <person name="Cheng F."/>
            <person name="Xu X."/>
            <person name="Chen S."/>
            <person name="Sun L."/>
            <person name="Li W."/>
            <person name="Shen Y."/>
            <person name="Shao Z."/>
            <person name="Liang X."/>
            <person name="Xu J."/>
            <person name="Jin Q."/>
        </authorList>
    </citation>
    <scope>NUCLEOTIDE SEQUENCE [LARGE SCALE GENOMIC DNA]</scope>
    <source>
        <strain>053442</strain>
    </source>
</reference>
<accession>A9M1J7</accession>
<sequence length="929" mass="104313">MTDYSKTVNLLESPFPMRGNLAKREPAWLKSWYEQKRYQKLREIAKGRPKFILHDGPPYANGDIHIGHAVNKILKDIIIRSKTQAGFDAPYVPGWDCHGLPIEVMVEKLHGKDMPKARFRELCREYAAEQIARQKKDFIRLGVLGDWDHPYLTMDFKTEADTVRMLGEIYKSGYLYRGAKPVQFCLDCGSSLAEAEVEYKDKVSPAIDVAYPFKDTAALAAAFGLAGIEGKAFAVIWTTTPWTLPASQAVSVGADVVYQLIDTPKGKLVLAKDLAEDALKRYGFSDGIAILAETTGDKLENLHMNHPFLERDIPMLNGDHVTTDAGTGLVHTAPAHGLEDYAVCNKYGIELYNPVNAEGRYIGETPRVAGMRVWEANPVILQWLEETGNLLASSKIEHSYAHCWRHKTPLIYRATGQWFVGMDKAGADGKTLRDKAIKAVDDTEFFPSWGRARLEAMIEGRPDWVVSRQRYWGTPMTFFVHKETGELHPNSAELLEKVALKIEEKGIEAWFSLDKSELLSAEDCENYDKLSDTMDVWFDSGSTHYSVVKQREELEWPADLYLEGSDQHRGWFQSSMLTGCASSMGRAPYKQLLTHGFVVDGEGKKMSKSIGNVVAPQEVYNEFGADILRLWAASTDYSGELAISKEILKRVTESYRRIRNTLSFLFANLSDFNPIEDAVQQADMVEIDRYALVLARRLQERLAGDYYPRYAFHFAVKEMVSFCSEDLGAFYLDILKDRLYTTKADSRARRSAQTALYHITRSLVLLIAPILCFTGEEAWDIIGGGEEDSVLFHTWHEFPTINEKTEAELVKKWTAIREAREAVTAAIEPLRADKTVGSSLQAEAEITAPEEMAGYLNALGEELRFAMLVSKAEVKVGSELAVAAKASDGEKCERCWHYTRDVGAVAGYETVCKRCAENVGGEGETRHYA</sequence>
<keyword id="KW-0030">Aminoacyl-tRNA synthetase</keyword>
<keyword id="KW-0067">ATP-binding</keyword>
<keyword id="KW-0963">Cytoplasm</keyword>
<keyword id="KW-0436">Ligase</keyword>
<keyword id="KW-0479">Metal-binding</keyword>
<keyword id="KW-0547">Nucleotide-binding</keyword>
<keyword id="KW-0648">Protein biosynthesis</keyword>
<keyword id="KW-0862">Zinc</keyword>
<evidence type="ECO:0000255" key="1">
    <source>
        <dbReference type="HAMAP-Rule" id="MF_02002"/>
    </source>
</evidence>